<proteinExistence type="inferred from homology"/>
<dbReference type="EC" id="2.7.8.13" evidence="1"/>
<dbReference type="EMBL" id="AP006618">
    <property type="protein sequence ID" value="BAD56609.1"/>
    <property type="molecule type" value="Genomic_DNA"/>
</dbReference>
<dbReference type="RefSeq" id="WP_011208294.1">
    <property type="nucleotide sequence ID" value="NC_006361.1"/>
</dbReference>
<dbReference type="SMR" id="Q5YYY2"/>
<dbReference type="STRING" id="247156.NFA_17630"/>
<dbReference type="GeneID" id="61132544"/>
<dbReference type="KEGG" id="nfa:NFA_17630"/>
<dbReference type="eggNOG" id="COG0472">
    <property type="taxonomic scope" value="Bacteria"/>
</dbReference>
<dbReference type="HOGENOM" id="CLU_023982_0_1_11"/>
<dbReference type="OrthoDB" id="9805475at2"/>
<dbReference type="UniPathway" id="UPA00219"/>
<dbReference type="Proteomes" id="UP000006820">
    <property type="component" value="Chromosome"/>
</dbReference>
<dbReference type="GO" id="GO:0005886">
    <property type="term" value="C:plasma membrane"/>
    <property type="evidence" value="ECO:0007669"/>
    <property type="project" value="UniProtKB-SubCell"/>
</dbReference>
<dbReference type="GO" id="GO:0046872">
    <property type="term" value="F:metal ion binding"/>
    <property type="evidence" value="ECO:0007669"/>
    <property type="project" value="UniProtKB-KW"/>
</dbReference>
<dbReference type="GO" id="GO:0008963">
    <property type="term" value="F:phospho-N-acetylmuramoyl-pentapeptide-transferase activity"/>
    <property type="evidence" value="ECO:0007669"/>
    <property type="project" value="UniProtKB-UniRule"/>
</dbReference>
<dbReference type="GO" id="GO:0051992">
    <property type="term" value="F:UDP-N-acetylmuramoyl-L-alanyl-D-glutamyl-meso-2,6-diaminopimelyl-D-alanyl-D-alanine:undecaprenyl-phosphate transferase activity"/>
    <property type="evidence" value="ECO:0007669"/>
    <property type="project" value="RHEA"/>
</dbReference>
<dbReference type="GO" id="GO:0051301">
    <property type="term" value="P:cell division"/>
    <property type="evidence" value="ECO:0007669"/>
    <property type="project" value="UniProtKB-KW"/>
</dbReference>
<dbReference type="GO" id="GO:0071555">
    <property type="term" value="P:cell wall organization"/>
    <property type="evidence" value="ECO:0007669"/>
    <property type="project" value="UniProtKB-KW"/>
</dbReference>
<dbReference type="GO" id="GO:0009252">
    <property type="term" value="P:peptidoglycan biosynthetic process"/>
    <property type="evidence" value="ECO:0007669"/>
    <property type="project" value="UniProtKB-UniRule"/>
</dbReference>
<dbReference type="GO" id="GO:0008360">
    <property type="term" value="P:regulation of cell shape"/>
    <property type="evidence" value="ECO:0007669"/>
    <property type="project" value="UniProtKB-KW"/>
</dbReference>
<dbReference type="CDD" id="cd06852">
    <property type="entry name" value="GT_MraY"/>
    <property type="match status" value="1"/>
</dbReference>
<dbReference type="HAMAP" id="MF_00038">
    <property type="entry name" value="MraY"/>
    <property type="match status" value="1"/>
</dbReference>
<dbReference type="InterPro" id="IPR000715">
    <property type="entry name" value="Glycosyl_transferase_4"/>
</dbReference>
<dbReference type="InterPro" id="IPR003524">
    <property type="entry name" value="PNAcMuramoyl-5peptid_Trfase"/>
</dbReference>
<dbReference type="InterPro" id="IPR018480">
    <property type="entry name" value="PNAcMuramoyl-5peptid_Trfase_CS"/>
</dbReference>
<dbReference type="NCBIfam" id="TIGR00445">
    <property type="entry name" value="mraY"/>
    <property type="match status" value="1"/>
</dbReference>
<dbReference type="PANTHER" id="PTHR22926">
    <property type="entry name" value="PHOSPHO-N-ACETYLMURAMOYL-PENTAPEPTIDE-TRANSFERASE"/>
    <property type="match status" value="1"/>
</dbReference>
<dbReference type="PANTHER" id="PTHR22926:SF5">
    <property type="entry name" value="PHOSPHO-N-ACETYLMURAMOYL-PENTAPEPTIDE-TRANSFERASE HOMOLOG"/>
    <property type="match status" value="1"/>
</dbReference>
<dbReference type="Pfam" id="PF00953">
    <property type="entry name" value="Glycos_transf_4"/>
    <property type="match status" value="1"/>
</dbReference>
<dbReference type="Pfam" id="PF10555">
    <property type="entry name" value="MraY_sig1"/>
    <property type="match status" value="1"/>
</dbReference>
<dbReference type="PROSITE" id="PS01347">
    <property type="entry name" value="MRAY_1"/>
    <property type="match status" value="1"/>
</dbReference>
<dbReference type="PROSITE" id="PS01348">
    <property type="entry name" value="MRAY_2"/>
    <property type="match status" value="1"/>
</dbReference>
<comment type="function">
    <text evidence="1">Catalyzes the initial step of the lipid cycle reactions in the biosynthesis of the cell wall peptidoglycan: transfers peptidoglycan precursor phospho-MurNAc-pentapeptide from UDP-MurNAc-pentapeptide onto the lipid carrier undecaprenyl phosphate, yielding undecaprenyl-pyrophosphoryl-MurNAc-pentapeptide, known as lipid I.</text>
</comment>
<comment type="catalytic activity">
    <reaction evidence="1">
        <text>UDP-N-acetyl-alpha-D-muramoyl-L-alanyl-gamma-D-glutamyl-meso-2,6-diaminopimeloyl-D-alanyl-D-alanine + di-trans,octa-cis-undecaprenyl phosphate = di-trans,octa-cis-undecaprenyl diphospho-N-acetyl-alpha-D-muramoyl-L-alanyl-D-glutamyl-meso-2,6-diaminopimeloyl-D-alanyl-D-alanine + UMP</text>
        <dbReference type="Rhea" id="RHEA:28386"/>
        <dbReference type="ChEBI" id="CHEBI:57865"/>
        <dbReference type="ChEBI" id="CHEBI:60392"/>
        <dbReference type="ChEBI" id="CHEBI:61386"/>
        <dbReference type="ChEBI" id="CHEBI:61387"/>
        <dbReference type="EC" id="2.7.8.13"/>
    </reaction>
</comment>
<comment type="cofactor">
    <cofactor evidence="1">
        <name>Mg(2+)</name>
        <dbReference type="ChEBI" id="CHEBI:18420"/>
    </cofactor>
</comment>
<comment type="pathway">
    <text evidence="1">Cell wall biogenesis; peptidoglycan biosynthesis.</text>
</comment>
<comment type="subcellular location">
    <subcellularLocation>
        <location evidence="1">Cell membrane</location>
        <topology evidence="1">Multi-pass membrane protein</topology>
    </subcellularLocation>
</comment>
<comment type="similarity">
    <text evidence="1">Belongs to the glycosyltransferase 4 family. MraY subfamily.</text>
</comment>
<reference key="1">
    <citation type="journal article" date="2004" name="Proc. Natl. Acad. Sci. U.S.A.">
        <title>The complete genomic sequence of Nocardia farcinica IFM 10152.</title>
        <authorList>
            <person name="Ishikawa J."/>
            <person name="Yamashita A."/>
            <person name="Mikami Y."/>
            <person name="Hoshino Y."/>
            <person name="Kurita H."/>
            <person name="Hotta K."/>
            <person name="Shiba T."/>
            <person name="Hattori M."/>
        </authorList>
    </citation>
    <scope>NUCLEOTIDE SEQUENCE [LARGE SCALE GENOMIC DNA]</scope>
    <source>
        <strain>IFM 10152</strain>
    </source>
</reference>
<protein>
    <recommendedName>
        <fullName evidence="1">Phospho-N-acetylmuramoyl-pentapeptide-transferase</fullName>
        <ecNumber evidence="1">2.7.8.13</ecNumber>
    </recommendedName>
    <alternativeName>
        <fullName evidence="1">UDP-MurNAc-pentapeptide phosphotransferase</fullName>
    </alternativeName>
</protein>
<gene>
    <name evidence="1" type="primary">mraY</name>
    <name type="ordered locus">NFA_17630</name>
</gene>
<feature type="chain" id="PRO_0000108860" description="Phospho-N-acetylmuramoyl-pentapeptide-transferase">
    <location>
        <begin position="1"/>
        <end position="358"/>
    </location>
</feature>
<feature type="transmembrane region" description="Helical" evidence="1">
    <location>
        <begin position="3"/>
        <end position="23"/>
    </location>
</feature>
<feature type="transmembrane region" description="Helical" evidence="1">
    <location>
        <begin position="54"/>
        <end position="74"/>
    </location>
</feature>
<feature type="transmembrane region" description="Helical" evidence="1">
    <location>
        <begin position="84"/>
        <end position="104"/>
    </location>
</feature>
<feature type="transmembrane region" description="Helical" evidence="1">
    <location>
        <begin position="114"/>
        <end position="134"/>
    </location>
</feature>
<feature type="transmembrane region" description="Helical" evidence="1">
    <location>
        <begin position="156"/>
        <end position="176"/>
    </location>
</feature>
<feature type="transmembrane region" description="Helical" evidence="1">
    <location>
        <begin position="187"/>
        <end position="207"/>
    </location>
</feature>
<feature type="transmembrane region" description="Helical" evidence="1">
    <location>
        <begin position="231"/>
        <end position="251"/>
    </location>
</feature>
<feature type="transmembrane region" description="Helical" evidence="1">
    <location>
        <begin position="255"/>
        <end position="275"/>
    </location>
</feature>
<feature type="transmembrane region" description="Helical" evidence="1">
    <location>
        <begin position="283"/>
        <end position="303"/>
    </location>
</feature>
<feature type="transmembrane region" description="Helical" evidence="1">
    <location>
        <begin position="330"/>
        <end position="350"/>
    </location>
</feature>
<name>MRAY_NOCFA</name>
<accession>Q5YYY2</accession>
<organism>
    <name type="scientific">Nocardia farcinica (strain IFM 10152)</name>
    <dbReference type="NCBI Taxonomy" id="247156"/>
    <lineage>
        <taxon>Bacteria</taxon>
        <taxon>Bacillati</taxon>
        <taxon>Actinomycetota</taxon>
        <taxon>Actinomycetes</taxon>
        <taxon>Mycobacteriales</taxon>
        <taxon>Nocardiaceae</taxon>
        <taxon>Nocardia</taxon>
    </lineage>
</organism>
<sequence>MRQILFAAAIALTVSILLTPALIKFFAKQGFGQEIRVDGPASHQSKRGTPTMGGVAILIGMWAGYLGSHLIGIAYDAEGPSASALLVLGLATALGAVGFIDDFIKIRKGRNLGLTAAGKYLGQLTAAIVFGVLALQFRGENGLTPASRHLSYVRDITTVSMGVIVFLAFVSLVVVAWSNAVNLTDGLDGLAAGSMSLVLGGYVIITFWQYYHACATKPETGCYNVRDPLDLALVCAAGTAACIGFLWWNAAPAKIFMGDTGSLALGGLLAGLSITTRTELLMVVIGALFVAEAASVVLQVAVFRTTRNRLFKMAPFHHHFELSKWAETTVIIRFWLLAAMASAFGLGLFYSEYLSAVG</sequence>
<keyword id="KW-0131">Cell cycle</keyword>
<keyword id="KW-0132">Cell division</keyword>
<keyword id="KW-1003">Cell membrane</keyword>
<keyword id="KW-0133">Cell shape</keyword>
<keyword id="KW-0961">Cell wall biogenesis/degradation</keyword>
<keyword id="KW-0460">Magnesium</keyword>
<keyword id="KW-0472">Membrane</keyword>
<keyword id="KW-0479">Metal-binding</keyword>
<keyword id="KW-0573">Peptidoglycan synthesis</keyword>
<keyword id="KW-1185">Reference proteome</keyword>
<keyword id="KW-0808">Transferase</keyword>
<keyword id="KW-0812">Transmembrane</keyword>
<keyword id="KW-1133">Transmembrane helix</keyword>
<evidence type="ECO:0000255" key="1">
    <source>
        <dbReference type="HAMAP-Rule" id="MF_00038"/>
    </source>
</evidence>